<accession>Q861R7</accession>
<accession>Q861R9</accession>
<accession>Q861T1</accession>
<accession>Q861T2</accession>
<accession>Q864R6</accession>
<protein>
    <recommendedName>
        <fullName>KAT8 regulatory NSL complex subunit 2</fullName>
    </recommendedName>
    <alternativeName>
        <fullName>NSL complex protein NSL2</fullName>
    </alternativeName>
    <alternativeName>
        <fullName>Non-specific lethal 2 homolog</fullName>
    </alternativeName>
</protein>
<gene>
    <name type="primary">KANSL2</name>
    <name type="synonym">NSL2</name>
</gene>
<dbReference type="EMBL" id="AY214590">
    <property type="protein sequence ID" value="AAO47890.1"/>
    <property type="status" value="ALT_INIT"/>
    <property type="molecule type" value="mRNA"/>
</dbReference>
<dbReference type="EMBL" id="AY214591">
    <property type="protein sequence ID" value="AAO47891.1"/>
    <property type="status" value="ALT_INIT"/>
    <property type="molecule type" value="mRNA"/>
</dbReference>
<dbReference type="EMBL" id="AY214592">
    <property type="protein sequence ID" value="AAO47892.1"/>
    <property type="molecule type" value="mRNA"/>
</dbReference>
<dbReference type="EMBL" id="AY214593">
    <property type="protein sequence ID" value="AAO47893.1"/>
    <property type="status" value="ALT_INIT"/>
    <property type="molecule type" value="mRNA"/>
</dbReference>
<dbReference type="EMBL" id="AY245697">
    <property type="protein sequence ID" value="AAP04353.1"/>
    <property type="status" value="ALT_INIT"/>
    <property type="molecule type" value="mRNA"/>
</dbReference>
<dbReference type="EMBL" id="AY245698">
    <property type="protein sequence ID" value="AAP04354.1"/>
    <property type="status" value="ALT_INIT"/>
    <property type="molecule type" value="mRNA"/>
</dbReference>
<dbReference type="EMBL" id="AY214597">
    <property type="protein sequence ID" value="AAO47894.1"/>
    <property type="status" value="ALT_SEQ"/>
    <property type="molecule type" value="Genomic_DNA"/>
</dbReference>
<dbReference type="EMBL" id="AY214595">
    <property type="protein sequence ID" value="AAO47894.1"/>
    <property type="status" value="JOINED"/>
    <property type="molecule type" value="Genomic_DNA"/>
</dbReference>
<dbReference type="EMBL" id="AY214596">
    <property type="protein sequence ID" value="AAO47894.1"/>
    <property type="status" value="JOINED"/>
    <property type="molecule type" value="Genomic_DNA"/>
</dbReference>
<dbReference type="EMBL" id="AY214599">
    <property type="protein sequence ID" value="AAO47895.1"/>
    <property type="molecule type" value="Genomic_DNA"/>
</dbReference>
<dbReference type="EMBL" id="AY214595">
    <property type="protein sequence ID" value="AAO47895.1"/>
    <property type="status" value="JOINED"/>
    <property type="molecule type" value="Genomic_DNA"/>
</dbReference>
<dbReference type="EMBL" id="AY214596">
    <property type="protein sequence ID" value="AAO47895.1"/>
    <property type="status" value="JOINED"/>
    <property type="molecule type" value="Genomic_DNA"/>
</dbReference>
<dbReference type="EMBL" id="AY214598">
    <property type="protein sequence ID" value="AAO47895.1"/>
    <property type="status" value="JOINED"/>
    <property type="molecule type" value="Genomic_DNA"/>
</dbReference>
<dbReference type="EMBL" id="AY214599">
    <property type="protein sequence ID" value="AAO47896.1"/>
    <property type="status" value="ALT_SEQ"/>
    <property type="molecule type" value="Genomic_DNA"/>
</dbReference>
<dbReference type="EMBL" id="AY214595">
    <property type="protein sequence ID" value="AAO47896.1"/>
    <property type="status" value="JOINED"/>
    <property type="molecule type" value="Genomic_DNA"/>
</dbReference>
<dbReference type="EMBL" id="AY214596">
    <property type="protein sequence ID" value="AAO47896.1"/>
    <property type="status" value="JOINED"/>
    <property type="molecule type" value="Genomic_DNA"/>
</dbReference>
<dbReference type="EMBL" id="AY214598">
    <property type="protein sequence ID" value="AAO47896.1"/>
    <property type="status" value="JOINED"/>
    <property type="molecule type" value="Genomic_DNA"/>
</dbReference>
<dbReference type="EMBL" id="AY214599">
    <property type="protein sequence ID" value="AAO47897.1"/>
    <property type="molecule type" value="Genomic_DNA"/>
</dbReference>
<dbReference type="EMBL" id="AY214595">
    <property type="protein sequence ID" value="AAO47897.1"/>
    <property type="status" value="JOINED"/>
    <property type="molecule type" value="Genomic_DNA"/>
</dbReference>
<dbReference type="EMBL" id="AY214596">
    <property type="protein sequence ID" value="AAO47897.1"/>
    <property type="status" value="JOINED"/>
    <property type="molecule type" value="Genomic_DNA"/>
</dbReference>
<dbReference type="EMBL" id="AY214598">
    <property type="protein sequence ID" value="AAO47897.1"/>
    <property type="status" value="JOINED"/>
    <property type="molecule type" value="Genomic_DNA"/>
</dbReference>
<dbReference type="RefSeq" id="NP_001273955.1">
    <property type="nucleotide sequence ID" value="NM_001287026.1"/>
</dbReference>
<dbReference type="RefSeq" id="NP_001273956.1">
    <property type="nucleotide sequence ID" value="NM_001287027.1"/>
</dbReference>
<dbReference type="SMR" id="Q861R7"/>
<dbReference type="STRING" id="9925.ENSCHIP00000032011"/>
<dbReference type="GeneID" id="100860885"/>
<dbReference type="KEGG" id="chx:100860885"/>
<dbReference type="CTD" id="54934"/>
<dbReference type="OrthoDB" id="677315at2759"/>
<dbReference type="Proteomes" id="UP000291000">
    <property type="component" value="Unassembled WGS sequence"/>
</dbReference>
<dbReference type="Proteomes" id="UP000694566">
    <property type="component" value="Unplaced"/>
</dbReference>
<dbReference type="GO" id="GO:0000123">
    <property type="term" value="C:histone acetyltransferase complex"/>
    <property type="evidence" value="ECO:0000250"/>
    <property type="project" value="UniProtKB"/>
</dbReference>
<dbReference type="GO" id="GO:0005739">
    <property type="term" value="C:mitochondrion"/>
    <property type="evidence" value="ECO:0007669"/>
    <property type="project" value="UniProtKB-SubCell"/>
</dbReference>
<dbReference type="GO" id="GO:0044545">
    <property type="term" value="C:NSL complex"/>
    <property type="evidence" value="ECO:0007669"/>
    <property type="project" value="TreeGrafter"/>
</dbReference>
<dbReference type="GO" id="GO:0005634">
    <property type="term" value="C:nucleus"/>
    <property type="evidence" value="ECO:0007669"/>
    <property type="project" value="UniProtKB-SubCell"/>
</dbReference>
<dbReference type="GO" id="GO:0006325">
    <property type="term" value="P:chromatin organization"/>
    <property type="evidence" value="ECO:0007669"/>
    <property type="project" value="UniProtKB-KW"/>
</dbReference>
<dbReference type="InterPro" id="IPR026316">
    <property type="entry name" value="NSL2"/>
</dbReference>
<dbReference type="InterPro" id="IPR025927">
    <property type="entry name" value="Potential_DNA-bd"/>
</dbReference>
<dbReference type="PANTHER" id="PTHR13453">
    <property type="entry name" value="KAT8 REGULATORY NSL COMPLEX SUBUNIT 2"/>
    <property type="match status" value="1"/>
</dbReference>
<dbReference type="PANTHER" id="PTHR13453:SF1">
    <property type="entry name" value="KAT8 REGULATORY NSL COMPLEX SUBUNIT 2"/>
    <property type="match status" value="1"/>
</dbReference>
<dbReference type="Pfam" id="PF13891">
    <property type="entry name" value="zf-C3Hc3H"/>
    <property type="match status" value="2"/>
</dbReference>
<sequence>MNRIRIHVLPTNRGRITPVPRSQEPLSCSFTHRPCSQPRLEGQEFCIKHILEDKNAPFKQCSYISTKNGKRCPSAAPKPEKKDGVSFCAEHARRNALALHAQMKKTNPGPVGETLLCQLSSYAKTELGSQTPESSRSEASRILDEDSWSDGEQEPITVDQTWRGDPDSEADSIDRDQEDPLKHAGVYTAEEVALIMREKLIRLQSLDIDQVKRLQHLLKEKKRRYLHNRKVEHEALGSSLLTGPEGLLARERENLKRLKCLRRYRQRYGVKALLHRQLKERRMLATDGAAQQAHTTRSSQRCLAFVDDVRCSNQSLPMTRHCLTHICQDTNRVLFKCCQGSEEVPCNKPVPVSLSEDPCCPLHFQLPPQMYKPEQVLSVPDDLEAGPMDLYLSAAELQPTESLPLEFSDDLDVVGDSMQCPPSPLLFDPSLTLEDHPVKEIAEGPVDILGQMQMAGDGCRSQGPRNSEKAPAPLSQSGIATANGKPEPTSVS</sequence>
<organism>
    <name type="scientific">Capra hircus</name>
    <name type="common">Goat</name>
    <dbReference type="NCBI Taxonomy" id="9925"/>
    <lineage>
        <taxon>Eukaryota</taxon>
        <taxon>Metazoa</taxon>
        <taxon>Chordata</taxon>
        <taxon>Craniata</taxon>
        <taxon>Vertebrata</taxon>
        <taxon>Euteleostomi</taxon>
        <taxon>Mammalia</taxon>
        <taxon>Eutheria</taxon>
        <taxon>Laurasiatheria</taxon>
        <taxon>Artiodactyla</taxon>
        <taxon>Ruminantia</taxon>
        <taxon>Pecora</taxon>
        <taxon>Bovidae</taxon>
        <taxon>Caprinae</taxon>
        <taxon>Capra</taxon>
    </lineage>
</organism>
<name>KANL2_CAPHI</name>
<proteinExistence type="evidence at transcript level"/>
<reference key="1">
    <citation type="journal article" date="2003" name="Gene">
        <title>Putative FLJ20436 gene characterisation in goat. Observed ubiquitous expression in goat and transgenic mice allowed to restrict the location of an hypothesised insulator element.</title>
        <authorList>
            <person name="Mata X."/>
            <person name="Taourit S."/>
            <person name="Le Provost F."/>
        </authorList>
    </citation>
    <scope>NUCLEOTIDE SEQUENCE [GENOMIC DNA / MRNA] (ISOFORMS 1; 2; 3; 4 AND 5)</scope>
    <scope>TISSUE SPECIFICITY</scope>
</reference>
<evidence type="ECO:0000250" key="1">
    <source>
        <dbReference type="UniProtKB" id="Q6AY70"/>
    </source>
</evidence>
<evidence type="ECO:0000250" key="2">
    <source>
        <dbReference type="UniProtKB" id="Q8BQR4"/>
    </source>
</evidence>
<evidence type="ECO:0000250" key="3">
    <source>
        <dbReference type="UniProtKB" id="Q9H9L4"/>
    </source>
</evidence>
<evidence type="ECO:0000256" key="4">
    <source>
        <dbReference type="SAM" id="MobiDB-lite"/>
    </source>
</evidence>
<evidence type="ECO:0000269" key="5">
    <source>
    </source>
</evidence>
<evidence type="ECO:0000303" key="6">
    <source>
    </source>
</evidence>
<evidence type="ECO:0000305" key="7"/>
<comment type="function">
    <text evidence="2 3">Non-catalytic component of the NSL histone acetyltransferase complex, a multiprotein complex that mediates histone H4 acetylation at 'Lys-5'- and 'Lys-8' (H4K5ac and H4K8ac) at transcription start sites and promotes transcription initiation. Required for NSL complex stability and for transcription of intraciliary transport genes in both ciliated and non-ciliated cells by regulating histone H4 acetylation at 'Lys-5'- and 'Lys-12' (H4K5ac and H4K12ac). This is necessary for cilium assembly in ciliated cells and for organization of the microtubule cytoskeleton in non-ciliated cells. Required within the NSL complex to maintain nuclear architecture stability by promoting KAT8-mediated acetylation of lamin LMNA.</text>
</comment>
<comment type="subunit">
    <text evidence="3">Component of the NSL complex at least composed of KAT8/MOF, KANSL1, KANSL2, KANSL3, MCRS1, PHF20, OGT1/OGT, WDR5 and HCFC1.</text>
</comment>
<comment type="subcellular location">
    <subcellularLocation>
        <location evidence="3">Nucleus</location>
    </subcellularLocation>
    <subcellularLocation>
        <location evidence="2">Mitochondrion</location>
    </subcellularLocation>
</comment>
<comment type="alternative products">
    <event type="alternative splicing"/>
    <isoform>
        <id>Q861R7-1</id>
        <name>1</name>
        <sequence type="displayed"/>
    </isoform>
    <isoform>
        <id>Q861R7-2</id>
        <name>2</name>
        <sequence type="described" ref="VSP_023267"/>
    </isoform>
    <isoform>
        <id>Q861R7-3</id>
        <name>3</name>
        <sequence type="described" ref="VSP_023266"/>
    </isoform>
    <isoform>
        <id>Q861R7-4</id>
        <name>4</name>
        <sequence type="described" ref="VSP_023266 VSP_023267"/>
    </isoform>
    <isoform>
        <id>Q861R7-5</id>
        <name>5</name>
        <sequence type="described" ref="VSP_023268 VSP_023269"/>
    </isoform>
    <text>Additional isoforms seem to exist.</text>
</comment>
<comment type="tissue specificity">
    <text evidence="5">Ubiquitously expressed.</text>
</comment>
<comment type="sequence caution" evidence="7">
    <conflict type="erroneous initiation">
        <sequence resource="EMBL-CDS" id="AAO47890"/>
    </conflict>
    <text>Truncated N-terminus.</text>
</comment>
<comment type="sequence caution" evidence="7">
    <conflict type="erroneous initiation">
        <sequence resource="EMBL-CDS" id="AAO47891"/>
    </conflict>
    <text>Truncated N-terminus.</text>
</comment>
<comment type="sequence caution" evidence="7">
    <conflict type="erroneous initiation">
        <sequence resource="EMBL-CDS" id="AAO47893"/>
    </conflict>
    <text>Truncated N-terminus.</text>
</comment>
<comment type="sequence caution" evidence="7">
    <conflict type="erroneous gene model prediction">
        <sequence resource="EMBL-CDS" id="AAO47894"/>
    </conflict>
</comment>
<comment type="sequence caution" evidence="7">
    <conflict type="erroneous gene model prediction">
        <sequence resource="EMBL-CDS" id="AAO47896"/>
    </conflict>
</comment>
<comment type="sequence caution" evidence="7">
    <conflict type="erroneous initiation">
        <sequence resource="EMBL-CDS" id="AAP04353"/>
    </conflict>
    <text>Truncated N-terminus.</text>
</comment>
<comment type="sequence caution" evidence="7">
    <conflict type="erroneous initiation">
        <sequence resource="EMBL-CDS" id="AAP04354"/>
    </conflict>
    <text>Truncated N-terminus.</text>
</comment>
<feature type="chain" id="PRO_0000278291" description="KAT8 regulatory NSL complex subunit 2">
    <location>
        <begin position="1"/>
        <end position="492"/>
    </location>
</feature>
<feature type="region of interest" description="Disordered" evidence="4">
    <location>
        <begin position="126"/>
        <end position="182"/>
    </location>
</feature>
<feature type="region of interest" description="Required for interaction with other NSL complex members" evidence="2">
    <location>
        <begin position="308"/>
        <end position="364"/>
    </location>
</feature>
<feature type="region of interest" description="Disordered" evidence="4">
    <location>
        <begin position="453"/>
        <end position="492"/>
    </location>
</feature>
<feature type="compositionally biased region" description="Basic and acidic residues" evidence="4">
    <location>
        <begin position="135"/>
        <end position="144"/>
    </location>
</feature>
<feature type="compositionally biased region" description="Basic and acidic residues" evidence="4">
    <location>
        <begin position="162"/>
        <end position="182"/>
    </location>
</feature>
<feature type="modified residue" description="Phosphothreonine" evidence="3">
    <location>
        <position position="131"/>
    </location>
</feature>
<feature type="modified residue" description="Phosphoserine" evidence="3">
    <location>
        <position position="147"/>
    </location>
</feature>
<feature type="modified residue" description="Phosphoserine" evidence="3">
    <location>
        <position position="149"/>
    </location>
</feature>
<feature type="modified residue" description="Phosphoserine" evidence="1">
    <location>
        <position position="168"/>
    </location>
</feature>
<feature type="modified residue" description="Phosphoserine" evidence="1">
    <location>
        <position position="172"/>
    </location>
</feature>
<feature type="cross-link" description="Glycyl lysine isopeptide (Lys-Gly) (interchain with G-Cter in SUMO2)" evidence="3">
    <location>
        <position position="78"/>
    </location>
</feature>
<feature type="splice variant" id="VSP_023266" description="In isoform 3 and isoform 4." evidence="6">
    <location>
        <begin position="1"/>
        <end position="195"/>
    </location>
</feature>
<feature type="splice variant" id="VSP_023268" description="In isoform 5." evidence="6">
    <original>HICQDTNRVLFKCCQGSEEVPCN</original>
    <variation>QKDATAIGDLLTLYSGLMERALD</variation>
    <location>
        <begin position="325"/>
        <end position="347"/>
    </location>
</feature>
<feature type="splice variant" id="VSP_023269" description="In isoform 5." evidence="6">
    <location>
        <begin position="348"/>
        <end position="492"/>
    </location>
</feature>
<feature type="splice variant" id="VSP_023267" description="In isoform 2 and isoform 4." evidence="6">
    <location>
        <begin position="376"/>
        <end position="409"/>
    </location>
</feature>
<keyword id="KW-0025">Alternative splicing</keyword>
<keyword id="KW-0156">Chromatin regulator</keyword>
<keyword id="KW-1017">Isopeptide bond</keyword>
<keyword id="KW-0496">Mitochondrion</keyword>
<keyword id="KW-0539">Nucleus</keyword>
<keyword id="KW-0597">Phosphoprotein</keyword>
<keyword id="KW-1185">Reference proteome</keyword>
<keyword id="KW-0832">Ubl conjugation</keyword>